<comment type="function">
    <text evidence="1">PPIases accelerate the folding of proteins. It catalyzes the cis-trans isomerization of proline imidic peptide bonds in oligopeptides (By similarity).</text>
</comment>
<comment type="catalytic activity">
    <reaction>
        <text>[protein]-peptidylproline (omega=180) = [protein]-peptidylproline (omega=0)</text>
        <dbReference type="Rhea" id="RHEA:16237"/>
        <dbReference type="Rhea" id="RHEA-COMP:10747"/>
        <dbReference type="Rhea" id="RHEA-COMP:10748"/>
        <dbReference type="ChEBI" id="CHEBI:83833"/>
        <dbReference type="ChEBI" id="CHEBI:83834"/>
        <dbReference type="EC" id="5.2.1.8"/>
    </reaction>
</comment>
<comment type="activity regulation">
    <text evidence="1">Inhibited by both FK506 and rapamycin.</text>
</comment>
<comment type="subcellular location">
    <subcellularLocation>
        <location evidence="1">Cytoplasm</location>
    </subcellularLocation>
</comment>
<comment type="similarity">
    <text evidence="3">Belongs to the FKBP-type PPIase family. FKBP1 subfamily.</text>
</comment>
<name>FKB1A_ASPFU</name>
<protein>
    <recommendedName>
        <fullName>FK506-binding protein 1A</fullName>
        <shortName>FKBP</shortName>
        <ecNumber>5.2.1.8</ecNumber>
    </recommendedName>
    <alternativeName>
        <fullName>Peptidyl-prolyl cis-trans isomerase</fullName>
        <shortName>PPIase</shortName>
    </alternativeName>
    <alternativeName>
        <fullName>Rapamycin-binding protein</fullName>
    </alternativeName>
</protein>
<dbReference type="EC" id="5.2.1.8"/>
<dbReference type="EMBL" id="AAHF01000006">
    <property type="protein sequence ID" value="EAL89058.1"/>
    <property type="molecule type" value="Genomic_DNA"/>
</dbReference>
<dbReference type="RefSeq" id="XP_751096.1">
    <property type="nucleotide sequence ID" value="XM_746003.1"/>
</dbReference>
<dbReference type="PDB" id="5HWB">
    <property type="method" value="X-ray"/>
    <property type="resolution" value="2.31 A"/>
    <property type="chains" value="A/B=1-112"/>
</dbReference>
<dbReference type="PDB" id="5HWC">
    <property type="method" value="X-ray"/>
    <property type="resolution" value="2.05 A"/>
    <property type="chains" value="A=1-112"/>
</dbReference>
<dbReference type="PDB" id="5J6E">
    <property type="method" value="X-ray"/>
    <property type="resolution" value="3.20 A"/>
    <property type="chains" value="A/B=1-111"/>
</dbReference>
<dbReference type="PDB" id="6TZ7">
    <property type="method" value="X-ray"/>
    <property type="resolution" value="2.50 A"/>
    <property type="chains" value="C=2-112"/>
</dbReference>
<dbReference type="PDB" id="6VCV">
    <property type="method" value="X-ray"/>
    <property type="resolution" value="1.60 A"/>
    <property type="chains" value="A/B=1-112"/>
</dbReference>
<dbReference type="PDB" id="7U0S">
    <property type="method" value="X-ray"/>
    <property type="resolution" value="1.70 A"/>
    <property type="chains" value="A/B=2-112"/>
</dbReference>
<dbReference type="PDB" id="7U0U">
    <property type="method" value="X-ray"/>
    <property type="resolution" value="1.90 A"/>
    <property type="chains" value="B=1-112"/>
</dbReference>
<dbReference type="PDBsum" id="5HWB"/>
<dbReference type="PDBsum" id="5HWC"/>
<dbReference type="PDBsum" id="5J6E"/>
<dbReference type="PDBsum" id="6TZ7"/>
<dbReference type="PDBsum" id="6VCV"/>
<dbReference type="PDBsum" id="7U0S"/>
<dbReference type="PDBsum" id="7U0U"/>
<dbReference type="SMR" id="Q4WLV6"/>
<dbReference type="FunCoup" id="Q4WLV6">
    <property type="interactions" value="371"/>
</dbReference>
<dbReference type="STRING" id="330879.Q4WLV6"/>
<dbReference type="EnsemblFungi" id="EAL89058">
    <property type="protein sequence ID" value="EAL89058"/>
    <property type="gene ID" value="AFUA_6G12170"/>
</dbReference>
<dbReference type="GeneID" id="3508401"/>
<dbReference type="KEGG" id="afm:AFUA_6G12170"/>
<dbReference type="VEuPathDB" id="FungiDB:Afu6g12170"/>
<dbReference type="eggNOG" id="KOG0544">
    <property type="taxonomic scope" value="Eukaryota"/>
</dbReference>
<dbReference type="HOGENOM" id="CLU_013615_12_1_1"/>
<dbReference type="InParanoid" id="Q4WLV6"/>
<dbReference type="OMA" id="FTSMNNQ"/>
<dbReference type="OrthoDB" id="1902587at2759"/>
<dbReference type="Proteomes" id="UP000002530">
    <property type="component" value="Chromosome 6"/>
</dbReference>
<dbReference type="GO" id="GO:0005737">
    <property type="term" value="C:cytoplasm"/>
    <property type="evidence" value="ECO:0000318"/>
    <property type="project" value="GO_Central"/>
</dbReference>
<dbReference type="GO" id="GO:0005829">
    <property type="term" value="C:cytosol"/>
    <property type="evidence" value="ECO:0000314"/>
    <property type="project" value="AspGD"/>
</dbReference>
<dbReference type="GO" id="GO:0005634">
    <property type="term" value="C:nucleus"/>
    <property type="evidence" value="ECO:0000314"/>
    <property type="project" value="AspGD"/>
</dbReference>
<dbReference type="GO" id="GO:0003755">
    <property type="term" value="F:peptidyl-prolyl cis-trans isomerase activity"/>
    <property type="evidence" value="ECO:0000318"/>
    <property type="project" value="GO_Central"/>
</dbReference>
<dbReference type="FunFam" id="3.10.50.40:FF:000025">
    <property type="entry name" value="Peptidylprolyl isomerase"/>
    <property type="match status" value="1"/>
</dbReference>
<dbReference type="Gene3D" id="3.10.50.40">
    <property type="match status" value="1"/>
</dbReference>
<dbReference type="InterPro" id="IPR050689">
    <property type="entry name" value="FKBP-type_PPIase"/>
</dbReference>
<dbReference type="InterPro" id="IPR046357">
    <property type="entry name" value="PPIase_dom_sf"/>
</dbReference>
<dbReference type="InterPro" id="IPR001179">
    <property type="entry name" value="PPIase_FKBP_dom"/>
</dbReference>
<dbReference type="PANTHER" id="PTHR10516:SF443">
    <property type="entry name" value="FK506-BINDING PROTEIN 59-RELATED"/>
    <property type="match status" value="1"/>
</dbReference>
<dbReference type="PANTHER" id="PTHR10516">
    <property type="entry name" value="PEPTIDYL-PROLYL CIS-TRANS ISOMERASE"/>
    <property type="match status" value="1"/>
</dbReference>
<dbReference type="Pfam" id="PF00254">
    <property type="entry name" value="FKBP_C"/>
    <property type="match status" value="1"/>
</dbReference>
<dbReference type="SUPFAM" id="SSF54534">
    <property type="entry name" value="FKBP-like"/>
    <property type="match status" value="1"/>
</dbReference>
<dbReference type="PROSITE" id="PS50059">
    <property type="entry name" value="FKBP_PPIASE"/>
    <property type="match status" value="1"/>
</dbReference>
<organism>
    <name type="scientific">Aspergillus fumigatus (strain ATCC MYA-4609 / CBS 101355 / FGSC A1100 / Af293)</name>
    <name type="common">Neosartorya fumigata</name>
    <dbReference type="NCBI Taxonomy" id="330879"/>
    <lineage>
        <taxon>Eukaryota</taxon>
        <taxon>Fungi</taxon>
        <taxon>Dikarya</taxon>
        <taxon>Ascomycota</taxon>
        <taxon>Pezizomycotina</taxon>
        <taxon>Eurotiomycetes</taxon>
        <taxon>Eurotiomycetidae</taxon>
        <taxon>Eurotiales</taxon>
        <taxon>Aspergillaceae</taxon>
        <taxon>Aspergillus</taxon>
        <taxon>Aspergillus subgen. Fumigati</taxon>
    </lineage>
</organism>
<proteinExistence type="evidence at protein level"/>
<accession>Q4WLV6</accession>
<gene>
    <name type="primary">fpr1A</name>
    <name type="ORF">AFUA_6G12170</name>
</gene>
<keyword id="KW-0002">3D-structure</keyword>
<keyword id="KW-0963">Cytoplasm</keyword>
<keyword id="KW-0413">Isomerase</keyword>
<keyword id="KW-1185">Reference proteome</keyword>
<keyword id="KW-0697">Rotamase</keyword>
<sequence>MGVTKELKSPGNGVDFPKKGDFVTIHYTGRLTDGSKFDSSVDRNEPFQTQIGTGRVIKGWDEGVPQMSLGEKAVLTITPDYGYGARGFPPVIPGNSTLIFEVELLGINNKRA</sequence>
<feature type="chain" id="PRO_0000233318" description="FK506-binding protein 1A">
    <location>
        <begin position="1"/>
        <end position="112"/>
    </location>
</feature>
<feature type="domain" description="PPIase FKBP-type" evidence="2">
    <location>
        <begin position="20"/>
        <end position="108"/>
    </location>
</feature>
<feature type="strand" evidence="4">
    <location>
        <begin position="3"/>
        <end position="9"/>
    </location>
</feature>
<feature type="strand" evidence="4">
    <location>
        <begin position="22"/>
        <end position="31"/>
    </location>
</feature>
<feature type="strand" evidence="4">
    <location>
        <begin position="36"/>
        <end position="39"/>
    </location>
</feature>
<feature type="turn" evidence="4">
    <location>
        <begin position="40"/>
        <end position="44"/>
    </location>
</feature>
<feature type="strand" evidence="4">
    <location>
        <begin position="47"/>
        <end position="50"/>
    </location>
</feature>
<feature type="strand" evidence="4">
    <location>
        <begin position="52"/>
        <end position="56"/>
    </location>
</feature>
<feature type="helix" evidence="4">
    <location>
        <begin position="58"/>
        <end position="63"/>
    </location>
</feature>
<feature type="helix" evidence="4">
    <location>
        <begin position="64"/>
        <end position="66"/>
    </location>
</feature>
<feature type="strand" evidence="4">
    <location>
        <begin position="72"/>
        <end position="77"/>
    </location>
</feature>
<feature type="helix" evidence="4">
    <location>
        <begin position="79"/>
        <end position="81"/>
    </location>
</feature>
<feature type="turn" evidence="4">
    <location>
        <begin position="82"/>
        <end position="86"/>
    </location>
</feature>
<feature type="turn" evidence="4">
    <location>
        <begin position="89"/>
        <end position="91"/>
    </location>
</feature>
<feature type="strand" evidence="4">
    <location>
        <begin position="98"/>
        <end position="107"/>
    </location>
</feature>
<evidence type="ECO:0000250" key="1"/>
<evidence type="ECO:0000255" key="2">
    <source>
        <dbReference type="PROSITE-ProRule" id="PRU00277"/>
    </source>
</evidence>
<evidence type="ECO:0000305" key="3"/>
<evidence type="ECO:0007829" key="4">
    <source>
        <dbReference type="PDB" id="6VCV"/>
    </source>
</evidence>
<reference key="1">
    <citation type="journal article" date="2005" name="Nature">
        <title>Genomic sequence of the pathogenic and allergenic filamentous fungus Aspergillus fumigatus.</title>
        <authorList>
            <person name="Nierman W.C."/>
            <person name="Pain A."/>
            <person name="Anderson M.J."/>
            <person name="Wortman J.R."/>
            <person name="Kim H.S."/>
            <person name="Arroyo J."/>
            <person name="Berriman M."/>
            <person name="Abe K."/>
            <person name="Archer D.B."/>
            <person name="Bermejo C."/>
            <person name="Bennett J.W."/>
            <person name="Bowyer P."/>
            <person name="Chen D."/>
            <person name="Collins M."/>
            <person name="Coulsen R."/>
            <person name="Davies R."/>
            <person name="Dyer P.S."/>
            <person name="Farman M.L."/>
            <person name="Fedorova N."/>
            <person name="Fedorova N.D."/>
            <person name="Feldblyum T.V."/>
            <person name="Fischer R."/>
            <person name="Fosker N."/>
            <person name="Fraser A."/>
            <person name="Garcia J.L."/>
            <person name="Garcia M.J."/>
            <person name="Goble A."/>
            <person name="Goldman G.H."/>
            <person name="Gomi K."/>
            <person name="Griffith-Jones S."/>
            <person name="Gwilliam R."/>
            <person name="Haas B.J."/>
            <person name="Haas H."/>
            <person name="Harris D.E."/>
            <person name="Horiuchi H."/>
            <person name="Huang J."/>
            <person name="Humphray S."/>
            <person name="Jimenez J."/>
            <person name="Keller N."/>
            <person name="Khouri H."/>
            <person name="Kitamoto K."/>
            <person name="Kobayashi T."/>
            <person name="Konzack S."/>
            <person name="Kulkarni R."/>
            <person name="Kumagai T."/>
            <person name="Lafton A."/>
            <person name="Latge J.-P."/>
            <person name="Li W."/>
            <person name="Lord A."/>
            <person name="Lu C."/>
            <person name="Majoros W.H."/>
            <person name="May G.S."/>
            <person name="Miller B.L."/>
            <person name="Mohamoud Y."/>
            <person name="Molina M."/>
            <person name="Monod M."/>
            <person name="Mouyna I."/>
            <person name="Mulligan S."/>
            <person name="Murphy L.D."/>
            <person name="O'Neil S."/>
            <person name="Paulsen I."/>
            <person name="Penalva M.A."/>
            <person name="Pertea M."/>
            <person name="Price C."/>
            <person name="Pritchard B.L."/>
            <person name="Quail M.A."/>
            <person name="Rabbinowitsch E."/>
            <person name="Rawlins N."/>
            <person name="Rajandream M.A."/>
            <person name="Reichard U."/>
            <person name="Renauld H."/>
            <person name="Robson G.D."/>
            <person name="Rodriguez de Cordoba S."/>
            <person name="Rodriguez-Pena J.M."/>
            <person name="Ronning C.M."/>
            <person name="Rutter S."/>
            <person name="Salzberg S.L."/>
            <person name="Sanchez M."/>
            <person name="Sanchez-Ferrero J.C."/>
            <person name="Saunders D."/>
            <person name="Seeger K."/>
            <person name="Squares R."/>
            <person name="Squares S."/>
            <person name="Takeuchi M."/>
            <person name="Tekaia F."/>
            <person name="Turner G."/>
            <person name="Vazquez de Aldana C.R."/>
            <person name="Weidman J."/>
            <person name="White O."/>
            <person name="Woodward J.R."/>
            <person name="Yu J.-H."/>
            <person name="Fraser C.M."/>
            <person name="Galagan J.E."/>
            <person name="Asai K."/>
            <person name="Machida M."/>
            <person name="Hall N."/>
            <person name="Barrell B.G."/>
            <person name="Denning D.W."/>
        </authorList>
    </citation>
    <scope>NUCLEOTIDE SEQUENCE [LARGE SCALE GENOMIC DNA]</scope>
    <source>
        <strain>ATCC MYA-4609 / CBS 101355 / FGSC A1100 / Af293</strain>
    </source>
</reference>